<sequence length="850" mass="98130">MKLVIFDGNSILYRAFFALPELTTSNNIPTNAIYGFVNVILKYLEQEKPDYVAVAFDKRGREARKSEYEEYKANRKPMPDNLQVQIPYVREILYAFNIPIIEFEGYEADDVIGSLVNQFKNTGLDIVIITGDRDTLQLLDKNVVVKIVSTKFDKTVEDLYTVENVKEKYGVWANQVPDYKALVGDQSDNIPGVKGIGEKSAQKLLEEYSSLEEIYQNLDKIKSSIREKLEAGKDMAFLSKRLATIVCDLPLNVKLEDLRTKEWNKERLYEILVQLEFKSIIKRLGLSEVVQFEFVQQRTDIPDVEQKELESISQIRSKEIPLMFVQGEKCFYLYDQESNTVFITSNKLLIEEILKSDTVKIMYDLKNIFHQLNLEDTNNIKNCEDVMIASYVLDSTRSSYELETLFVSYLNTDIEAVKKDKKIVSVVLLKRLWDELLRLIDLNSCQFLYENIERPLIPVLYEMEKTGFKVDRDALIQYTKEIENKILKLETQIYQIAGEWFNINSPKQLSYILFEKLKLPVIKKTKTGYSTDAEVLEELFDKHEIVPLILDYRMYTKILTTYCQGLLQAINPSSGRVHTTFIQTGTATGRLASSDPNLQNIPVKYDEGKLIRKVFVPEGGHVLIDADYSQIELRILAHISEDERLISAFKNNVDIHSQTAAEVFGVDIADVTPEMRSQAKAVNFGIVYGISDYGLARDIKISRKEAAEFINKYFERYPKVKEYLDNTVKFARDNGFVLTLFNRKRYIKDIKSTNRNLRGYAERIAMNSPIQGSAADIMKLAMIKVYQKLKENNLKSKIILQVHDELLIEAPYEEKDIVKEIVKREMENAVALKVPLVVEVKEGLNWYETK</sequence>
<name>DPO1_CALBD</name>
<protein>
    <recommendedName>
        <fullName>DNA polymerase I</fullName>
        <shortName>Pol I</shortName>
        <ecNumber>2.7.7.7</ecNumber>
    </recommendedName>
</protein>
<gene>
    <name type="primary">polA</name>
    <name type="ordered locus">Athe_1441</name>
</gene>
<keyword id="KW-0227">DNA damage</keyword>
<keyword id="KW-0234">DNA repair</keyword>
<keyword id="KW-0235">DNA replication</keyword>
<keyword id="KW-0238">DNA-binding</keyword>
<keyword id="KW-0239">DNA-directed DNA polymerase</keyword>
<keyword id="KW-0269">Exonuclease</keyword>
<keyword id="KW-0378">Hydrolase</keyword>
<keyword id="KW-0540">Nuclease</keyword>
<keyword id="KW-0548">Nucleotidyltransferase</keyword>
<keyword id="KW-0808">Transferase</keyword>
<organism>
    <name type="scientific">Caldicellulosiruptor bescii (strain ATCC BAA-1888 / DSM 6725 / KCTC 15123 / Z-1320)</name>
    <name type="common">Anaerocellum thermophilum</name>
    <dbReference type="NCBI Taxonomy" id="521460"/>
    <lineage>
        <taxon>Bacteria</taxon>
        <taxon>Bacillati</taxon>
        <taxon>Bacillota</taxon>
        <taxon>Bacillota incertae sedis</taxon>
        <taxon>Caldicellulosiruptorales</taxon>
        <taxon>Caldicellulosiruptoraceae</taxon>
        <taxon>Caldicellulosiruptor</taxon>
    </lineage>
</organism>
<reference key="1">
    <citation type="submission" date="1996-06" db="EMBL/GenBank/DDBJ databases">
        <authorList>
            <person name="Bolchakova E.V."/>
            <person name="Novikov A.A."/>
            <person name="Zverlov V.V."/>
            <person name="Galina V."/>
            <person name="Velikodvorskaya G.V."/>
        </authorList>
    </citation>
    <scope>NUCLEOTIDE SEQUENCE [GENOMIC DNA]</scope>
</reference>
<reference key="2">
    <citation type="submission" date="2009-01" db="EMBL/GenBank/DDBJ databases">
        <title>Complete sequence of chromosome of Caldicellulosiruptor becscii DSM 6725.</title>
        <authorList>
            <person name="Lucas S."/>
            <person name="Copeland A."/>
            <person name="Lapidus A."/>
            <person name="Glavina del Rio T."/>
            <person name="Tice H."/>
            <person name="Bruce D."/>
            <person name="Goodwin L."/>
            <person name="Pitluck S."/>
            <person name="Sims D."/>
            <person name="Meincke L."/>
            <person name="Brettin T."/>
            <person name="Detter J.C."/>
            <person name="Han C."/>
            <person name="Larimer F."/>
            <person name="Land M."/>
            <person name="Hauser L."/>
            <person name="Kyrpides N."/>
            <person name="Ovchinnikova G."/>
            <person name="Kataeva I."/>
            <person name="Adams M.W.W."/>
        </authorList>
    </citation>
    <scope>NUCLEOTIDE SEQUENCE [LARGE SCALE GENOMIC DNA]</scope>
    <source>
        <strain>ATCC BAA-1888 / DSM 6725 / KCTC 15123 / Z-1320</strain>
    </source>
</reference>
<evidence type="ECO:0000250" key="1"/>
<evidence type="ECO:0000305" key="2"/>
<proteinExistence type="inferred from homology"/>
<accession>Q59156</accession>
<accession>B9MS85</accession>
<dbReference type="EC" id="2.7.7.7"/>
<dbReference type="EMBL" id="X98575">
    <property type="protein sequence ID" value="CAA67184.1"/>
    <property type="molecule type" value="Genomic_DNA"/>
</dbReference>
<dbReference type="EMBL" id="CP001393">
    <property type="protein sequence ID" value="ACM60539.1"/>
    <property type="molecule type" value="Genomic_DNA"/>
</dbReference>
<dbReference type="RefSeq" id="WP_015907902.1">
    <property type="nucleotide sequence ID" value="NC_012034.1"/>
</dbReference>
<dbReference type="SMR" id="Q59156"/>
<dbReference type="STRING" id="521460.Athe_1441"/>
<dbReference type="GeneID" id="31772786"/>
<dbReference type="KEGG" id="ate:Athe_1441"/>
<dbReference type="eggNOG" id="COG0258">
    <property type="taxonomic scope" value="Bacteria"/>
</dbReference>
<dbReference type="eggNOG" id="COG0749">
    <property type="taxonomic scope" value="Bacteria"/>
</dbReference>
<dbReference type="HOGENOM" id="CLU_004675_0_0_9"/>
<dbReference type="Proteomes" id="UP000007723">
    <property type="component" value="Chromosome"/>
</dbReference>
<dbReference type="GO" id="GO:0008408">
    <property type="term" value="F:3'-5' exonuclease activity"/>
    <property type="evidence" value="ECO:0007669"/>
    <property type="project" value="InterPro"/>
</dbReference>
<dbReference type="GO" id="GO:0008409">
    <property type="term" value="F:5'-3' exonuclease activity"/>
    <property type="evidence" value="ECO:0007669"/>
    <property type="project" value="InterPro"/>
</dbReference>
<dbReference type="GO" id="GO:0003677">
    <property type="term" value="F:DNA binding"/>
    <property type="evidence" value="ECO:0007669"/>
    <property type="project" value="UniProtKB-KW"/>
</dbReference>
<dbReference type="GO" id="GO:0003887">
    <property type="term" value="F:DNA-directed DNA polymerase activity"/>
    <property type="evidence" value="ECO:0007669"/>
    <property type="project" value="UniProtKB-KW"/>
</dbReference>
<dbReference type="GO" id="GO:0006261">
    <property type="term" value="P:DNA-templated DNA replication"/>
    <property type="evidence" value="ECO:0007669"/>
    <property type="project" value="InterPro"/>
</dbReference>
<dbReference type="GO" id="GO:0006302">
    <property type="term" value="P:double-strand break repair"/>
    <property type="evidence" value="ECO:0007669"/>
    <property type="project" value="TreeGrafter"/>
</dbReference>
<dbReference type="CDD" id="cd08637">
    <property type="entry name" value="DNA_pol_A_pol_I_C"/>
    <property type="match status" value="1"/>
</dbReference>
<dbReference type="CDD" id="cd06140">
    <property type="entry name" value="DNA_polA_I_Bacillus_like_exo"/>
    <property type="match status" value="1"/>
</dbReference>
<dbReference type="CDD" id="cd09898">
    <property type="entry name" value="H3TH_53EXO"/>
    <property type="match status" value="1"/>
</dbReference>
<dbReference type="CDD" id="cd09859">
    <property type="entry name" value="PIN_53EXO"/>
    <property type="match status" value="1"/>
</dbReference>
<dbReference type="FunFam" id="1.10.150.20:FF:000002">
    <property type="entry name" value="DNA polymerase I"/>
    <property type="match status" value="1"/>
</dbReference>
<dbReference type="FunFam" id="1.10.150.20:FF:000003">
    <property type="entry name" value="DNA polymerase I"/>
    <property type="match status" value="1"/>
</dbReference>
<dbReference type="FunFam" id="1.20.1060.10:FF:000001">
    <property type="entry name" value="DNA polymerase I"/>
    <property type="match status" value="1"/>
</dbReference>
<dbReference type="FunFam" id="3.40.50.1010:FF:000001">
    <property type="entry name" value="DNA polymerase I"/>
    <property type="match status" value="1"/>
</dbReference>
<dbReference type="Gene3D" id="3.30.70.370">
    <property type="match status" value="1"/>
</dbReference>
<dbReference type="Gene3D" id="1.10.150.20">
    <property type="entry name" value="5' to 3' exonuclease, C-terminal subdomain"/>
    <property type="match status" value="2"/>
</dbReference>
<dbReference type="Gene3D" id="3.40.50.1010">
    <property type="entry name" value="5'-nuclease"/>
    <property type="match status" value="1"/>
</dbReference>
<dbReference type="Gene3D" id="3.30.420.10">
    <property type="entry name" value="Ribonuclease H-like superfamily/Ribonuclease H"/>
    <property type="match status" value="1"/>
</dbReference>
<dbReference type="Gene3D" id="1.20.1060.10">
    <property type="entry name" value="Taq DNA Polymerase, Chain T, domain 4"/>
    <property type="match status" value="1"/>
</dbReference>
<dbReference type="InterPro" id="IPR002562">
    <property type="entry name" value="3'-5'_exonuclease_dom"/>
</dbReference>
<dbReference type="InterPro" id="IPR020046">
    <property type="entry name" value="5-3_exonucl_a-hlix_arch_N"/>
</dbReference>
<dbReference type="InterPro" id="IPR002421">
    <property type="entry name" value="5-3_exonuclease"/>
</dbReference>
<dbReference type="InterPro" id="IPR036279">
    <property type="entry name" value="5-3_exonuclease_C_sf"/>
</dbReference>
<dbReference type="InterPro" id="IPR019760">
    <property type="entry name" value="DNA-dir_DNA_pol_A_CS"/>
</dbReference>
<dbReference type="InterPro" id="IPR001098">
    <property type="entry name" value="DNA-dir_DNA_pol_A_palm_dom"/>
</dbReference>
<dbReference type="InterPro" id="IPR043502">
    <property type="entry name" value="DNA/RNA_pol_sf"/>
</dbReference>
<dbReference type="InterPro" id="IPR020045">
    <property type="entry name" value="DNA_polI_H3TH"/>
</dbReference>
<dbReference type="InterPro" id="IPR018320">
    <property type="entry name" value="DNA_polymerase_1"/>
</dbReference>
<dbReference type="InterPro" id="IPR002298">
    <property type="entry name" value="DNA_polymerase_A"/>
</dbReference>
<dbReference type="InterPro" id="IPR008918">
    <property type="entry name" value="HhH2"/>
</dbReference>
<dbReference type="InterPro" id="IPR029060">
    <property type="entry name" value="PIN-like_dom_sf"/>
</dbReference>
<dbReference type="InterPro" id="IPR012337">
    <property type="entry name" value="RNaseH-like_sf"/>
</dbReference>
<dbReference type="InterPro" id="IPR036397">
    <property type="entry name" value="RNaseH_sf"/>
</dbReference>
<dbReference type="NCBIfam" id="TIGR00593">
    <property type="entry name" value="pola"/>
    <property type="match status" value="1"/>
</dbReference>
<dbReference type="NCBIfam" id="NF004397">
    <property type="entry name" value="PRK05755.1"/>
    <property type="match status" value="1"/>
</dbReference>
<dbReference type="PANTHER" id="PTHR10133">
    <property type="entry name" value="DNA POLYMERASE I"/>
    <property type="match status" value="1"/>
</dbReference>
<dbReference type="PANTHER" id="PTHR10133:SF27">
    <property type="entry name" value="DNA POLYMERASE NU"/>
    <property type="match status" value="1"/>
</dbReference>
<dbReference type="Pfam" id="PF01367">
    <property type="entry name" value="5_3_exonuc"/>
    <property type="match status" value="1"/>
</dbReference>
<dbReference type="Pfam" id="PF02739">
    <property type="entry name" value="5_3_exonuc_N"/>
    <property type="match status" value="1"/>
</dbReference>
<dbReference type="Pfam" id="PF00476">
    <property type="entry name" value="DNA_pol_A"/>
    <property type="match status" value="1"/>
</dbReference>
<dbReference type="PRINTS" id="PR00868">
    <property type="entry name" value="DNAPOLI"/>
</dbReference>
<dbReference type="SMART" id="SM00474">
    <property type="entry name" value="35EXOc"/>
    <property type="match status" value="1"/>
</dbReference>
<dbReference type="SMART" id="SM00475">
    <property type="entry name" value="53EXOc"/>
    <property type="match status" value="1"/>
</dbReference>
<dbReference type="SMART" id="SM00279">
    <property type="entry name" value="HhH2"/>
    <property type="match status" value="1"/>
</dbReference>
<dbReference type="SMART" id="SM00482">
    <property type="entry name" value="POLAc"/>
    <property type="match status" value="1"/>
</dbReference>
<dbReference type="SUPFAM" id="SSF47807">
    <property type="entry name" value="5' to 3' exonuclease, C-terminal subdomain"/>
    <property type="match status" value="1"/>
</dbReference>
<dbReference type="SUPFAM" id="SSF56672">
    <property type="entry name" value="DNA/RNA polymerases"/>
    <property type="match status" value="1"/>
</dbReference>
<dbReference type="SUPFAM" id="SSF88723">
    <property type="entry name" value="PIN domain-like"/>
    <property type="match status" value="1"/>
</dbReference>
<dbReference type="SUPFAM" id="SSF53098">
    <property type="entry name" value="Ribonuclease H-like"/>
    <property type="match status" value="1"/>
</dbReference>
<dbReference type="PROSITE" id="PS00447">
    <property type="entry name" value="DNA_POLYMERASE_A"/>
    <property type="match status" value="1"/>
</dbReference>
<feature type="chain" id="PRO_0000101231" description="DNA polymerase I">
    <location>
        <begin position="1"/>
        <end position="850"/>
    </location>
</feature>
<feature type="domain" description="5'-3' exonuclease">
    <location>
        <begin position="1"/>
        <end position="288"/>
    </location>
</feature>
<feature type="region of interest" description="Polymerase" evidence="1">
    <location>
        <begin position="470"/>
        <end position="850"/>
    </location>
</feature>
<feature type="sequence conflict" description="In Ref. 1; CAA67184." evidence="2" ref="1">
    <original>N</original>
    <variation>S</variation>
    <location>
        <position position="451"/>
    </location>
</feature>
<feature type="sequence conflict" description="In Ref. 1; CAA67184." evidence="2" ref="1">
    <original>A</original>
    <variation>P</variation>
    <location>
        <position position="774"/>
    </location>
</feature>
<feature type="sequence conflict" description="In Ref. 1; CAA67184." evidence="2" ref="1">
    <original>A</original>
    <variation>R</variation>
    <location>
        <position position="831"/>
    </location>
</feature>
<comment type="function">
    <text evidence="1">In addition to polymerase activity, this DNA polymerase exhibits 3'-5' and 5'-3' exonuclease activity.</text>
</comment>
<comment type="catalytic activity">
    <reaction>
        <text>DNA(n) + a 2'-deoxyribonucleoside 5'-triphosphate = DNA(n+1) + diphosphate</text>
        <dbReference type="Rhea" id="RHEA:22508"/>
        <dbReference type="Rhea" id="RHEA-COMP:17339"/>
        <dbReference type="Rhea" id="RHEA-COMP:17340"/>
        <dbReference type="ChEBI" id="CHEBI:33019"/>
        <dbReference type="ChEBI" id="CHEBI:61560"/>
        <dbReference type="ChEBI" id="CHEBI:173112"/>
        <dbReference type="EC" id="2.7.7.7"/>
    </reaction>
</comment>
<comment type="similarity">
    <text evidence="2">Belongs to the DNA polymerase type-A family.</text>
</comment>